<protein>
    <recommendedName>
        <fullName>Activin receptor type-1</fullName>
        <ecNumber evidence="22">2.7.11.30</ecNumber>
    </recommendedName>
    <alternativeName>
        <fullName>Activin receptor type I</fullName>
        <shortName>ACTR-I</shortName>
    </alternativeName>
    <alternativeName>
        <fullName>Activin receptor-like kinase 2</fullName>
        <shortName>ALK-2</shortName>
    </alternativeName>
    <alternativeName>
        <fullName>Serine/threonine-protein kinase receptor R1</fullName>
        <shortName>SKR1</shortName>
    </alternativeName>
    <alternativeName>
        <fullName>TGF-B superfamily receptor type I</fullName>
        <shortName>TSR-I</shortName>
    </alternativeName>
</protein>
<proteinExistence type="evidence at protein level"/>
<reference key="1">
    <citation type="journal article" date="1993" name="J. Biol. Chem.">
        <title>A widely expressed transmembrane serine/threonine kinase that does not bind activin, inhibin, transforming growth factor beta, or bone morphogenic factor.</title>
        <authorList>
            <person name="Matsuzaki K."/>
            <person name="McKeehan W.L."/>
        </authorList>
    </citation>
    <scope>NUCLEOTIDE SEQUENCE [MRNA]</scope>
    <scope>TISSUE SPECIFICITY</scope>
</reference>
<reference key="2">
    <citation type="journal article" date="1993" name="Oncogene">
        <title>Activin receptor-like kinases: a novel subclass of cell-surface receptors with predicted serine/threonine kinase activity.</title>
        <authorList>
            <person name="ten Dijke P."/>
            <person name="Ichijo H."/>
            <person name="Franzen P."/>
            <person name="Schulz P."/>
            <person name="Saras J."/>
            <person name="Toyoshima H."/>
            <person name="Heldin C.-H."/>
            <person name="Miyazono K."/>
        </authorList>
    </citation>
    <scope>NUCLEOTIDE SEQUENCE [MRNA]</scope>
    <source>
        <tissue>Placenta</tissue>
    </source>
</reference>
<reference key="3">
    <citation type="journal article" date="2004" name="Genome Res.">
        <title>The status, quality, and expansion of the NIH full-length cDNA project: the Mammalian Gene Collection (MGC).</title>
        <authorList>
            <consortium name="The MGC Project Team"/>
        </authorList>
    </citation>
    <scope>NUCLEOTIDE SEQUENCE [LARGE SCALE MRNA]</scope>
    <source>
        <tissue>Lung</tissue>
    </source>
</reference>
<reference key="4">
    <citation type="journal article" date="1996" name="Biochemistry">
        <title>Interaction of transforming growth factor beta receptors with apolipoprotein J/clusterin.</title>
        <authorList>
            <person name="Reddy K.B."/>
            <person name="Karode M.C."/>
            <person name="Harmony A.K."/>
            <person name="Howe P.H."/>
        </authorList>
    </citation>
    <scope>INTERACTION WITH CLU</scope>
</reference>
<reference key="5">
    <citation type="journal article" date="1998" name="J. Biol. Chem.">
        <title>Specific activation of Smad1 signaling pathways by the BMP7 type I receptor, ALK2.</title>
        <authorList>
            <person name="Macias-Silva M."/>
            <person name="Hoodless P.A."/>
            <person name="Tang S.J."/>
            <person name="Buchwald M."/>
            <person name="Wrana J.L."/>
        </authorList>
    </citation>
    <scope>FUNCTION</scope>
    <scope>CATALYTIC ACTIVITY</scope>
    <scope>INTERACTION WITH BMP7</scope>
    <scope>MUTAGENESIS OF GLN-207</scope>
</reference>
<reference key="6">
    <citation type="journal article" date="2007" name="J. Endocrinol.">
        <title>Activin receptor-like kinase-2 inhibits activin signaling by blocking the binding of activin to its type II receptor.</title>
        <authorList>
            <person name="Renlund N."/>
            <person name="O'Neill F.H."/>
            <person name="Zhang L."/>
            <person name="Sidis Y."/>
            <person name="Teixeira J."/>
        </authorList>
    </citation>
    <scope>FUNCTION</scope>
    <scope>INTERACTION WITH ACVR2A AND AMHR2</scope>
</reference>
<reference key="7">
    <citation type="journal article" date="2008" name="FEBS J.">
        <title>Type I receptor binding of bone morphogenetic protein 6 is dependent on N-glycosylation of the ligand.</title>
        <authorList>
            <person name="Saremba S."/>
            <person name="Nickel J."/>
            <person name="Seher A."/>
            <person name="Kotzsch A."/>
            <person name="Sebald W."/>
            <person name="Mueller T.D."/>
        </authorList>
    </citation>
    <scope>INTERACTION WITH BMP6</scope>
</reference>
<reference key="8">
    <citation type="journal article" date="2009" name="Mol. Cell. Proteomics">
        <title>Large-scale proteomics analysis of the human kinome.</title>
        <authorList>
            <person name="Oppermann F.S."/>
            <person name="Gnad F."/>
            <person name="Olsen J.V."/>
            <person name="Hornberger R."/>
            <person name="Greff Z."/>
            <person name="Keri G."/>
            <person name="Mann M."/>
            <person name="Daub H."/>
        </authorList>
    </citation>
    <scope>PHOSPHORYLATION [LARGE SCALE ANALYSIS] AT SER-501</scope>
    <scope>IDENTIFICATION BY MASS SPECTROMETRY [LARGE SCALE ANALYSIS]</scope>
</reference>
<reference key="9">
    <citation type="journal article" date="2010" name="J. Biol. Chem.">
        <title>TGFbeta/BMP type I receptors ALK1 and ALK2 are essential for BMP9-induced osteogenic signaling in mesenchymal stem cells.</title>
        <authorList>
            <person name="Luo J."/>
            <person name="Tang M."/>
            <person name="Huang J."/>
            <person name="He B.C."/>
            <person name="Gao J.L."/>
            <person name="Chen L."/>
            <person name="Zuo G.W."/>
            <person name="Zhang W."/>
            <person name="Luo Q."/>
            <person name="Shi Q."/>
            <person name="Zhang B.Q."/>
            <person name="Bi Y."/>
            <person name="Luo X."/>
            <person name="Jiang W."/>
            <person name="Su Y."/>
            <person name="Shen J."/>
            <person name="Kim S.H."/>
            <person name="Huang E."/>
            <person name="Gao Y."/>
            <person name="Zhou J.Z."/>
            <person name="Yang K."/>
            <person name="Luu H.H."/>
            <person name="Pan X."/>
            <person name="Haydon R.C."/>
            <person name="Deng Z.L."/>
            <person name="He T.C."/>
        </authorList>
    </citation>
    <scope>FUNCTION</scope>
    <scope>INTERACTION WITH GDF2/BMP9</scope>
</reference>
<reference key="10">
    <citation type="journal article" date="2011" name="Mol. Cell. Biol.">
        <title>TSC-22 promotes transforming growth factor beta-mediated cardiac myofibroblast differentiation by antagonizing Smad7 activity.</title>
        <authorList>
            <person name="Yan X."/>
            <person name="Zhang J."/>
            <person name="Pan L."/>
            <person name="Wang P."/>
            <person name="Xue H."/>
            <person name="Zhang L."/>
            <person name="Gao X."/>
            <person name="Zhao X."/>
            <person name="Ning Y."/>
            <person name="Chen Y.G."/>
        </authorList>
    </citation>
    <scope>INTERACTION WITH TSC22D1</scope>
</reference>
<reference key="11">
    <citation type="journal article" date="2012" name="Nat. Cell Biol.">
        <title>Distinct and separable activities of the endocytic clathrin-coat components Fcho1/2 and AP-2 in developmental patterning.</title>
        <authorList>
            <person name="Umasankar P.K."/>
            <person name="Sanker S."/>
            <person name="Thieman J.R."/>
            <person name="Chakraborty S."/>
            <person name="Wendland B."/>
            <person name="Tsang M."/>
            <person name="Traub L.M."/>
        </authorList>
    </citation>
    <scope>INTERACTION WITH FCHO1</scope>
</reference>
<reference key="12">
    <citation type="journal article" date="2015" name="Mol. Endocrinol.">
        <title>Mutant activin-like kinase 2 in fibrodysplasia ossificans progressiva are activated via T203 by BMP type II receptors.</title>
        <authorList>
            <person name="Fujimoto M."/>
            <person name="Ohte S."/>
            <person name="Osawa K."/>
            <person name="Miyamoto A."/>
            <person name="Tsukamoto S."/>
            <person name="Mizuta T."/>
            <person name="Kokabu S."/>
            <person name="Suda N."/>
            <person name="Katagiri T."/>
        </authorList>
    </citation>
    <scope>FUNCTION</scope>
    <scope>MUTAGENESIS OF THR-203 AND GLY-325</scope>
</reference>
<reference key="13">
    <citation type="journal article" date="2020" name="Blood">
        <title>Erythroferrone lowers hepcidin by sequestering BMP2/6 heterodimer from binding to the BMP type I receptor ALK3.</title>
        <authorList>
            <person name="Wang C.Y."/>
            <person name="Xu Y."/>
            <person name="Traeger L."/>
            <person name="Dogan D.Y."/>
            <person name="Xiao X."/>
            <person name="Steinbicker A.U."/>
            <person name="Babitt J.L."/>
        </authorList>
    </citation>
    <scope>INTERACTION WITH BMP6</scope>
</reference>
<reference key="14">
    <citation type="submission" date="2009-06" db="PDB data bank">
        <title>Crystal structure of the kinase domain of type I activin receptor (ACVR1) in complex with FKBP12 and dorsomorphin.</title>
        <authorList>
            <consortium name="Structural genomics consortium (SGC)"/>
        </authorList>
    </citation>
    <scope>X-RAY CRYSTALLOGRAPHY (2.35 ANGSTROMS) OF 172-499 IN COMPLEX WITH FKBP1A</scope>
</reference>
<reference evidence="25" key="15">
    <citation type="journal article" date="2012" name="J. Biol. Chem.">
        <title>Structure of the bone morphogenetic protein receptor ALK2 and implications for fibrodysplasia ossificans progressiva.</title>
        <authorList>
            <person name="Chaikuad A."/>
            <person name="Alfano I."/>
            <person name="Kerr G."/>
            <person name="Sanvitale C.E."/>
            <person name="Boergermann J.H."/>
            <person name="Triffitt J.T."/>
            <person name="von Delft F."/>
            <person name="Knapp S."/>
            <person name="Knaus P."/>
            <person name="Bullock A.N."/>
        </authorList>
    </citation>
    <scope>X-RAY CRYSTALLOGRAPHY (2.35 ANGSTROMS) OF 172-499</scope>
    <scope>FUNCTION</scope>
</reference>
<reference key="16">
    <citation type="journal article" date="2006" name="Nat. Genet.">
        <title>A recurrent mutation in the BMP type I receptor ACVR1 causes inherited and sporadic fibrodysplasia ossificans progressiva.</title>
        <authorList>
            <person name="Shore E.M."/>
            <person name="Xu M."/>
            <person name="Feldman G.J."/>
            <person name="Fenstermacher D.A."/>
            <person name="Brown M.A."/>
            <person name="Kaplan F.S."/>
        </authorList>
    </citation>
    <scope>VARIANT FOP HIS-206</scope>
</reference>
<reference key="17">
    <citation type="journal article" date="2007" name="Nature">
        <title>Patterns of somatic mutation in human cancer genomes.</title>
        <authorList>
            <person name="Greenman C."/>
            <person name="Stephens P."/>
            <person name="Smith R."/>
            <person name="Dalgliesh G.L."/>
            <person name="Hunter C."/>
            <person name="Bignell G."/>
            <person name="Davies H."/>
            <person name="Teague J."/>
            <person name="Butler A."/>
            <person name="Stevens C."/>
            <person name="Edkins S."/>
            <person name="O'Meara S."/>
            <person name="Vastrik I."/>
            <person name="Schmidt E.E."/>
            <person name="Avis T."/>
            <person name="Barthorpe S."/>
            <person name="Bhamra G."/>
            <person name="Buck G."/>
            <person name="Choudhury B."/>
            <person name="Clements J."/>
            <person name="Cole J."/>
            <person name="Dicks E."/>
            <person name="Forbes S."/>
            <person name="Gray K."/>
            <person name="Halliday K."/>
            <person name="Harrison R."/>
            <person name="Hills K."/>
            <person name="Hinton J."/>
            <person name="Jenkinson A."/>
            <person name="Jones D."/>
            <person name="Menzies A."/>
            <person name="Mironenko T."/>
            <person name="Perry J."/>
            <person name="Raine K."/>
            <person name="Richardson D."/>
            <person name="Shepherd R."/>
            <person name="Small A."/>
            <person name="Tofts C."/>
            <person name="Varian J."/>
            <person name="Webb T."/>
            <person name="West S."/>
            <person name="Widaa S."/>
            <person name="Yates A."/>
            <person name="Cahill D.P."/>
            <person name="Louis D.N."/>
            <person name="Goldstraw P."/>
            <person name="Nicholson A.G."/>
            <person name="Brasseur F."/>
            <person name="Looijenga L."/>
            <person name="Weber B.L."/>
            <person name="Chiew Y.-E."/>
            <person name="DeFazio A."/>
            <person name="Greaves M.F."/>
            <person name="Green A.R."/>
            <person name="Campbell P."/>
            <person name="Birney E."/>
            <person name="Easton D.F."/>
            <person name="Chenevix-Trench G."/>
            <person name="Tan M.-H."/>
            <person name="Khoo S.K."/>
            <person name="Teh B.T."/>
            <person name="Yuen S.T."/>
            <person name="Leung S.Y."/>
            <person name="Wooster R."/>
            <person name="Futreal P.A."/>
            <person name="Stratton M.R."/>
        </authorList>
    </citation>
    <scope>VARIANTS [LARGE SCALE ANALYSIS] GLY-15; PHE-41; GLN-47 AND SER-115</scope>
</reference>
<reference key="18">
    <citation type="journal article" date="2009" name="Hum. Mutat.">
        <title>Classic and atypical fibrodysplasia ossificans progressiva (FOP) phenotypes are caused by mutations in the bone morphogenetic protein (BMP) type I receptor ACVR1.</title>
        <authorList>
            <person name="Kaplan F.S."/>
            <person name="Xu M."/>
            <person name="Seemann P."/>
            <person name="Connor J.M."/>
            <person name="Glaser D.L."/>
            <person name="Carroll L."/>
            <person name="Delai P."/>
            <person name="Fastnacht-Urban E."/>
            <person name="Forman S.J."/>
            <person name="Gillessen-Kaesbach G."/>
            <person name="Hoover-Fong J."/>
            <person name="Koester B."/>
            <person name="Pauli R.M."/>
            <person name="Reardon W."/>
            <person name="Zaidi S.A."/>
            <person name="Zasloff M."/>
            <person name="Morhart R."/>
            <person name="Mundlos S."/>
            <person name="Groppe J."/>
            <person name="Shore E.M."/>
        </authorList>
    </citation>
    <scope>VARIANTS FOP 197-PRO-PHE-198 DELINS LEU; HIS-206; GLU-207; ARG-328; TRP-328; GLU-328; ASP-356 AND PRO-375</scope>
</reference>
<reference key="19">
    <citation type="journal article" date="2009" name="PLoS ONE">
        <title>Novel mutations in ACVR1 result in atypical features in two fibrodysplasia ossificans progressiva patients.</title>
        <authorList>
            <person name="Petrie K.A."/>
            <person name="Lee W.H."/>
            <person name="Bullock A.N."/>
            <person name="Pointon J.J."/>
            <person name="Smith R."/>
            <person name="Russell R.G."/>
            <person name="Brown M.A."/>
            <person name="Wordsworth B.P."/>
            <person name="Triffitt J.T."/>
        </authorList>
    </citation>
    <scope>VARIANTS FOP ILE-202 AND GLU-328</scope>
</reference>
<accession>Q04771</accession>
<sequence>MVDGVMILPVLIMIALPSPSMEDEKPKVNPKLYMCVCEGLSCGNEDHCEGQQCFSSLSINDGFHVYQKGCFQVYEQGKMTCKTPPSPGQAVECCQGDWCNRNITAQLPTKGKSFPGTQNFHLEVGLIILSVVFAVCLLACLLGVALRKFKRRNQERLNPRDVEYGTIEGLITTNVGDSTLADLLDHSCTSGSGSGLPFLVQRTVARQITLLECVGKGRYGEVWRGSWQGENVAVKIFSSRDEKSWFRETELYNTVMLRHENILGFIASDMTSRHSSTQLWLITHYHEMGSLYDYLQLTTLDTVSCLRIVLSIASGLAHLHIEIFGTQGKPAIAHRDLKSKNILVKKNGQCCIADLGLAVMHSQSTNQLDVGNNPRVGTKRYMAPEVLDETIQVDCFDSYKRVDIWAFGLVLWEVARRMVSNGIVEDYKPPFYDVVPNDPSFEDMRKVVCVDQQRPNIPNRWFSDPTLTSLAKLMKECWYQNPSARLTALRIKKTLTKIDNSLDKLKTDC</sequence>
<name>ACVR1_HUMAN</name>
<comment type="function">
    <text evidence="2 3 10 14 17 18 22">Bone morphogenetic protein (BMP) type I receptor that is involved in a wide variety of biological processes, including bone, heart, cartilage, nervous, and reproductive system development and regulation (PubMed:20628059, PubMed:22977237). As a type I receptor, forms heterotetrameric receptor complexes with the type II receptors AMHR2, ACVR2A or ACVR2B (PubMed:17911401). Upon binding of ligands such as BMP7 or GDF2/BMP9 to the heteromeric complexes, type II receptors transphosphorylate ACVR1 intracellular domain (PubMed:25354296). In turn, ACVR1 kinase domain is activated and subsequently phosphorylates SMAD1/5/8 proteins that transduce the signal (PubMed:9748228). In addition to its role in mediating BMP pathway-specific signaling, suppresses TGFbeta/activin pathway signaling by interfering with the binding of activin to its type II receptor (PubMed:17911401). Besides canonical SMAD signaling, can activate non-canonical pathways such as p38 mitogen-activated protein kinases/MAPKs (By similarity). May promote the expression of HAMP, potentially via its interaction with BMP6 (By similarity).</text>
</comment>
<comment type="catalytic activity">
    <reaction>
        <text>L-threonyl-[receptor-protein] + ATP = O-phospho-L-threonyl-[receptor-protein] + ADP + H(+)</text>
        <dbReference type="Rhea" id="RHEA:44880"/>
        <dbReference type="Rhea" id="RHEA-COMP:11024"/>
        <dbReference type="Rhea" id="RHEA-COMP:11025"/>
        <dbReference type="ChEBI" id="CHEBI:15378"/>
        <dbReference type="ChEBI" id="CHEBI:30013"/>
        <dbReference type="ChEBI" id="CHEBI:30616"/>
        <dbReference type="ChEBI" id="CHEBI:61977"/>
        <dbReference type="ChEBI" id="CHEBI:456216"/>
        <dbReference type="EC" id="2.7.11.30"/>
    </reaction>
</comment>
<comment type="catalytic activity">
    <reaction evidence="22">
        <text>L-seryl-[receptor-protein] + ATP = O-phospho-L-seryl-[receptor-protein] + ADP + H(+)</text>
        <dbReference type="Rhea" id="RHEA:18673"/>
        <dbReference type="Rhea" id="RHEA-COMP:11022"/>
        <dbReference type="Rhea" id="RHEA-COMP:11023"/>
        <dbReference type="ChEBI" id="CHEBI:15378"/>
        <dbReference type="ChEBI" id="CHEBI:29999"/>
        <dbReference type="ChEBI" id="CHEBI:30616"/>
        <dbReference type="ChEBI" id="CHEBI:83421"/>
        <dbReference type="ChEBI" id="CHEBI:456216"/>
        <dbReference type="EC" id="2.7.11.30"/>
    </reaction>
</comment>
<comment type="cofactor">
    <cofactor evidence="1">
        <name>Mg(2+)</name>
        <dbReference type="ChEBI" id="CHEBI:18420"/>
    </cofactor>
    <cofactor evidence="1">
        <name>Mn(2+)</name>
        <dbReference type="ChEBI" id="CHEBI:29035"/>
    </cofactor>
</comment>
<comment type="subunit">
    <text evidence="10 11 14 15 16 19 21 22 23">Interacts with FKBP1A (PubMed:22484487, Ref.14). Interacts with FCHO1 (PubMed:22484487). Interacts with CLU (PubMed:8555189). Interacts with type II receptors AMHR2 and ACVR2A (PubMed:17911401). Interacts with BMP7 (PubMed:9748228). Interacts with GDF2/BMP9 (PubMed:20628059). Interacts with BMP6 (when glycosylated); the interaction may induce HAMP expression (PubMed:18070108, PubMed:31800957). Interacts with TSC22D1/TSC-22 (PubMed:21791611).</text>
</comment>
<comment type="interaction">
    <interactant intactId="EBI-1383616">
        <id>Q04771</id>
    </interactant>
    <interactant intactId="EBI-3950019">
        <id>Q9UF33</id>
        <label>EPHA6</label>
    </interactant>
    <organismsDiffer>false</organismsDiffer>
    <experiments>2</experiments>
</comment>
<comment type="subcellular location">
    <subcellularLocation>
        <location>Membrane</location>
        <topology>Single-pass type I membrane protein</topology>
    </subcellularLocation>
</comment>
<comment type="tissue specificity">
    <text evidence="20">Expressed in normal parenchymal cells, endothelial cells, fibroblasts and tumor-derived epithelial cells.</text>
</comment>
<comment type="disease" evidence="8 12 13">
    <disease id="DI-00499">
        <name>Fibrodysplasia ossificans progressiva</name>
        <acronym>FOP</acronym>
        <description>A rare autosomal dominant connective tissue disorder resulting in skeletal malformations and progressive extraskeletal ossification. Heterotopic ossification begins in childhood and can be induced by trauma or may occur without warning. Bone formation is episodic and progressive, leading to a debilitating ankylosis of all major joints of the axial and appendicular skeleton, rendering movement impossible.</description>
        <dbReference type="MIM" id="135100"/>
    </disease>
    <text>The disease is caused by variants affecting the gene represented in this entry.</text>
</comment>
<comment type="similarity">
    <text evidence="24">Belongs to the protein kinase superfamily. TKL Ser/Thr protein kinase family. TGFB receptor subfamily.</text>
</comment>
<dbReference type="EC" id="2.7.11.30" evidence="22"/>
<dbReference type="EMBL" id="L02911">
    <property type="protein sequence ID" value="AAA36614.1"/>
    <property type="molecule type" value="mRNA"/>
</dbReference>
<dbReference type="EMBL" id="Z22534">
    <property type="protein sequence ID" value="CAA80256.1"/>
    <property type="molecule type" value="mRNA"/>
</dbReference>
<dbReference type="EMBL" id="BC033867">
    <property type="protein sequence ID" value="AAH33867.1"/>
    <property type="molecule type" value="mRNA"/>
</dbReference>
<dbReference type="CCDS" id="CCDS2206.1"/>
<dbReference type="PIR" id="A45992">
    <property type="entry name" value="A45992"/>
</dbReference>
<dbReference type="RefSeq" id="NP_001096.1">
    <property type="nucleotide sequence ID" value="NM_001105.5"/>
</dbReference>
<dbReference type="RefSeq" id="NP_001104537.1">
    <property type="nucleotide sequence ID" value="NM_001111067.4"/>
</dbReference>
<dbReference type="RefSeq" id="NP_001334592.1">
    <property type="nucleotide sequence ID" value="NM_001347663.1"/>
</dbReference>
<dbReference type="RefSeq" id="NP_001334593.1">
    <property type="nucleotide sequence ID" value="NM_001347664.1"/>
</dbReference>
<dbReference type="RefSeq" id="NP_001334594.1">
    <property type="nucleotide sequence ID" value="NM_001347665.1"/>
</dbReference>
<dbReference type="RefSeq" id="NP_001334595.1">
    <property type="nucleotide sequence ID" value="NM_001347666.1"/>
</dbReference>
<dbReference type="RefSeq" id="NP_001334596.1">
    <property type="nucleotide sequence ID" value="NM_001347667.2"/>
</dbReference>
<dbReference type="RefSeq" id="XP_006712888.1">
    <property type="nucleotide sequence ID" value="XM_006712825.3"/>
</dbReference>
<dbReference type="RefSeq" id="XP_011510410.1">
    <property type="nucleotide sequence ID" value="XM_011512108.2"/>
</dbReference>
<dbReference type="PDB" id="3H9R">
    <property type="method" value="X-ray"/>
    <property type="resolution" value="2.35 A"/>
    <property type="chains" value="A=172-499"/>
</dbReference>
<dbReference type="PDB" id="3MTF">
    <property type="method" value="X-ray"/>
    <property type="resolution" value="2.15 A"/>
    <property type="chains" value="A/B=201-499"/>
</dbReference>
<dbReference type="PDB" id="3OOM">
    <property type="method" value="X-ray"/>
    <property type="resolution" value="2.00 A"/>
    <property type="chains" value="A=201-499"/>
</dbReference>
<dbReference type="PDB" id="3Q4U">
    <property type="method" value="X-ray"/>
    <property type="resolution" value="1.82 A"/>
    <property type="chains" value="A/B/C/D=201-499"/>
</dbReference>
<dbReference type="PDB" id="4BGG">
    <property type="method" value="X-ray"/>
    <property type="resolution" value="2.56 A"/>
    <property type="chains" value="A/B/C/D=201-499"/>
</dbReference>
<dbReference type="PDB" id="4C02">
    <property type="method" value="X-ray"/>
    <property type="resolution" value="2.17 A"/>
    <property type="chains" value="A=172-499"/>
</dbReference>
<dbReference type="PDB" id="4DYM">
    <property type="method" value="X-ray"/>
    <property type="resolution" value="2.42 A"/>
    <property type="chains" value="A=201-499"/>
</dbReference>
<dbReference type="PDB" id="5OXG">
    <property type="method" value="X-ray"/>
    <property type="resolution" value="2.13 A"/>
    <property type="chains" value="A/B/C/D=201-499"/>
</dbReference>
<dbReference type="PDB" id="5OY6">
    <property type="method" value="X-ray"/>
    <property type="resolution" value="2.56 A"/>
    <property type="chains" value="A/B/C/D=201-499"/>
</dbReference>
<dbReference type="PDB" id="5S75">
    <property type="method" value="X-ray"/>
    <property type="resolution" value="1.30 A"/>
    <property type="chains" value="A/B=201-499"/>
</dbReference>
<dbReference type="PDB" id="5S76">
    <property type="method" value="X-ray"/>
    <property type="resolution" value="1.31 A"/>
    <property type="chains" value="A/B=201-499"/>
</dbReference>
<dbReference type="PDB" id="5S77">
    <property type="method" value="X-ray"/>
    <property type="resolution" value="1.31 A"/>
    <property type="chains" value="A/B=201-499"/>
</dbReference>
<dbReference type="PDB" id="5S78">
    <property type="method" value="X-ray"/>
    <property type="resolution" value="1.30 A"/>
    <property type="chains" value="A/B=201-499"/>
</dbReference>
<dbReference type="PDB" id="5S79">
    <property type="method" value="X-ray"/>
    <property type="resolution" value="1.50 A"/>
    <property type="chains" value="A/B=201-499"/>
</dbReference>
<dbReference type="PDB" id="5S7A">
    <property type="method" value="X-ray"/>
    <property type="resolution" value="1.30 A"/>
    <property type="chains" value="A/B=201-499"/>
</dbReference>
<dbReference type="PDB" id="5S7B">
    <property type="method" value="X-ray"/>
    <property type="resolution" value="1.32 A"/>
    <property type="chains" value="A/B=201-499"/>
</dbReference>
<dbReference type="PDB" id="5S7C">
    <property type="method" value="X-ray"/>
    <property type="resolution" value="1.31 A"/>
    <property type="chains" value="A/B=201-499"/>
</dbReference>
<dbReference type="PDB" id="5S7D">
    <property type="method" value="X-ray"/>
    <property type="resolution" value="1.31 A"/>
    <property type="chains" value="A/B=201-499"/>
</dbReference>
<dbReference type="PDB" id="5S7E">
    <property type="method" value="X-ray"/>
    <property type="resolution" value="1.32 A"/>
    <property type="chains" value="A/B=201-499"/>
</dbReference>
<dbReference type="PDB" id="5S7F">
    <property type="method" value="X-ray"/>
    <property type="resolution" value="1.31 A"/>
    <property type="chains" value="A/B=201-499"/>
</dbReference>
<dbReference type="PDB" id="5S7G">
    <property type="method" value="X-ray"/>
    <property type="resolution" value="1.78 A"/>
    <property type="chains" value="A/B=201-499"/>
</dbReference>
<dbReference type="PDB" id="5S7H">
    <property type="method" value="X-ray"/>
    <property type="resolution" value="1.30 A"/>
    <property type="chains" value="A/B=201-499"/>
</dbReference>
<dbReference type="PDB" id="5S7I">
    <property type="method" value="X-ray"/>
    <property type="resolution" value="1.30 A"/>
    <property type="chains" value="A/B=201-499"/>
</dbReference>
<dbReference type="PDB" id="5S7J">
    <property type="method" value="X-ray"/>
    <property type="resolution" value="1.31 A"/>
    <property type="chains" value="A/B=201-499"/>
</dbReference>
<dbReference type="PDB" id="5S7K">
    <property type="method" value="X-ray"/>
    <property type="resolution" value="1.31 A"/>
    <property type="chains" value="A/B=201-499"/>
</dbReference>
<dbReference type="PDB" id="5S7L">
    <property type="method" value="X-ray"/>
    <property type="resolution" value="1.36 A"/>
    <property type="chains" value="A/B=201-499"/>
</dbReference>
<dbReference type="PDB" id="5S7M">
    <property type="method" value="X-ray"/>
    <property type="resolution" value="1.32 A"/>
    <property type="chains" value="A/B=201-499"/>
</dbReference>
<dbReference type="PDB" id="5S7N">
    <property type="method" value="X-ray"/>
    <property type="resolution" value="1.30 A"/>
    <property type="chains" value="A/B=201-499"/>
</dbReference>
<dbReference type="PDB" id="5S7O">
    <property type="method" value="X-ray"/>
    <property type="resolution" value="1.43 A"/>
    <property type="chains" value="A/B=201-499"/>
</dbReference>
<dbReference type="PDB" id="5S7P">
    <property type="method" value="X-ray"/>
    <property type="resolution" value="1.31 A"/>
    <property type="chains" value="A/B=201-499"/>
</dbReference>
<dbReference type="PDB" id="5S7Q">
    <property type="method" value="X-ray"/>
    <property type="resolution" value="1.53 A"/>
    <property type="chains" value="A/B=201-499"/>
</dbReference>
<dbReference type="PDB" id="5S7R">
    <property type="method" value="X-ray"/>
    <property type="resolution" value="1.46 A"/>
    <property type="chains" value="A/B=201-499"/>
</dbReference>
<dbReference type="PDB" id="5S7S">
    <property type="method" value="X-ray"/>
    <property type="resolution" value="1.30 A"/>
    <property type="chains" value="A/B=201-499"/>
</dbReference>
<dbReference type="PDB" id="5S7T">
    <property type="method" value="X-ray"/>
    <property type="resolution" value="1.30 A"/>
    <property type="chains" value="A/B=201-499"/>
</dbReference>
<dbReference type="PDB" id="5S7U">
    <property type="method" value="X-ray"/>
    <property type="resolution" value="1.59 A"/>
    <property type="chains" value="A/B=201-499"/>
</dbReference>
<dbReference type="PDB" id="5S7V">
    <property type="method" value="X-ray"/>
    <property type="resolution" value="1.31 A"/>
    <property type="chains" value="A/B=201-499"/>
</dbReference>
<dbReference type="PDB" id="5S7W">
    <property type="method" value="X-ray"/>
    <property type="resolution" value="1.33 A"/>
    <property type="chains" value="A/B=201-499"/>
</dbReference>
<dbReference type="PDB" id="5S7X">
    <property type="method" value="X-ray"/>
    <property type="resolution" value="1.30 A"/>
    <property type="chains" value="A/B=201-499"/>
</dbReference>
<dbReference type="PDB" id="5S7Y">
    <property type="method" value="X-ray"/>
    <property type="resolution" value="1.37 A"/>
    <property type="chains" value="A/B=201-499"/>
</dbReference>
<dbReference type="PDB" id="5S7Z">
    <property type="method" value="X-ray"/>
    <property type="resolution" value="1.30 A"/>
    <property type="chains" value="A/B=201-499"/>
</dbReference>
<dbReference type="PDB" id="5S80">
    <property type="method" value="X-ray"/>
    <property type="resolution" value="1.67 A"/>
    <property type="chains" value="A/B=201-499"/>
</dbReference>
<dbReference type="PDB" id="5S81">
    <property type="method" value="X-ray"/>
    <property type="resolution" value="1.43 A"/>
    <property type="chains" value="A/B=201-499"/>
</dbReference>
<dbReference type="PDB" id="5S82">
    <property type="method" value="X-ray"/>
    <property type="resolution" value="1.71 A"/>
    <property type="chains" value="A/B=201-499"/>
</dbReference>
<dbReference type="PDB" id="5S83">
    <property type="method" value="X-ray"/>
    <property type="resolution" value="1.33 A"/>
    <property type="chains" value="A/B=201-499"/>
</dbReference>
<dbReference type="PDB" id="5S84">
    <property type="method" value="X-ray"/>
    <property type="resolution" value="1.35 A"/>
    <property type="chains" value="A/B=201-499"/>
</dbReference>
<dbReference type="PDB" id="5S85">
    <property type="method" value="X-ray"/>
    <property type="resolution" value="1.33 A"/>
    <property type="chains" value="A/B=201-499"/>
</dbReference>
<dbReference type="PDB" id="5S86">
    <property type="method" value="X-ray"/>
    <property type="resolution" value="1.31 A"/>
    <property type="chains" value="A/B=201-499"/>
</dbReference>
<dbReference type="PDB" id="5S87">
    <property type="method" value="X-ray"/>
    <property type="resolution" value="1.30 A"/>
    <property type="chains" value="A/B=201-499"/>
</dbReference>
<dbReference type="PDB" id="5S88">
    <property type="method" value="X-ray"/>
    <property type="resolution" value="1.31 A"/>
    <property type="chains" value="A/B=201-499"/>
</dbReference>
<dbReference type="PDB" id="5S89">
    <property type="method" value="X-ray"/>
    <property type="resolution" value="1.30 A"/>
    <property type="chains" value="A/B=201-499"/>
</dbReference>
<dbReference type="PDB" id="5S8A">
    <property type="method" value="X-ray"/>
    <property type="resolution" value="1.30 A"/>
    <property type="chains" value="A/B=201-499"/>
</dbReference>
<dbReference type="PDB" id="5S8B">
    <property type="method" value="X-ray"/>
    <property type="resolution" value="1.64 A"/>
    <property type="chains" value="A/B=201-499"/>
</dbReference>
<dbReference type="PDB" id="5S9K">
    <property type="method" value="X-ray"/>
    <property type="resolution" value="1.35 A"/>
    <property type="chains" value="A/B=201-499"/>
</dbReference>
<dbReference type="PDB" id="6ACR">
    <property type="method" value="X-ray"/>
    <property type="resolution" value="2.01 A"/>
    <property type="chains" value="A/B=201-499"/>
</dbReference>
<dbReference type="PDB" id="6EIX">
    <property type="method" value="X-ray"/>
    <property type="resolution" value="2.30 A"/>
    <property type="chains" value="A=172-509"/>
</dbReference>
<dbReference type="PDB" id="6GI6">
    <property type="method" value="X-ray"/>
    <property type="resolution" value="1.98 A"/>
    <property type="chains" value="A=201-499"/>
</dbReference>
<dbReference type="PDB" id="6GIN">
    <property type="method" value="X-ray"/>
    <property type="resolution" value="2.20 A"/>
    <property type="chains" value="A/B=201-499"/>
</dbReference>
<dbReference type="PDB" id="6GIP">
    <property type="method" value="X-ray"/>
    <property type="resolution" value="2.17 A"/>
    <property type="chains" value="A=201-499"/>
</dbReference>
<dbReference type="PDB" id="6I1S">
    <property type="method" value="X-ray"/>
    <property type="resolution" value="1.52 A"/>
    <property type="chains" value="A=172-499"/>
</dbReference>
<dbReference type="PDB" id="6JUX">
    <property type="method" value="X-ray"/>
    <property type="resolution" value="1.75 A"/>
    <property type="chains" value="A=201-499"/>
</dbReference>
<dbReference type="PDB" id="6SRH">
    <property type="method" value="X-ray"/>
    <property type="resolution" value="1.25 A"/>
    <property type="chains" value="A/B=201-499"/>
</dbReference>
<dbReference type="PDB" id="6SZM">
    <property type="method" value="X-ray"/>
    <property type="resolution" value="1.42 A"/>
    <property type="chains" value="A/B=201-499"/>
</dbReference>
<dbReference type="PDB" id="6T6D">
    <property type="method" value="X-ray"/>
    <property type="resolution" value="2.56 A"/>
    <property type="chains" value="A/B/C/D=201-499"/>
</dbReference>
<dbReference type="PDB" id="6T8N">
    <property type="method" value="X-ray"/>
    <property type="resolution" value="1.77 A"/>
    <property type="chains" value="A/B=201-499"/>
</dbReference>
<dbReference type="PDB" id="6TN8">
    <property type="method" value="X-ray"/>
    <property type="resolution" value="1.63 A"/>
    <property type="chains" value="A=201-499"/>
</dbReference>
<dbReference type="PDB" id="6UNQ">
    <property type="method" value="X-ray"/>
    <property type="resolution" value="2.40 A"/>
    <property type="chains" value="A=201-499"/>
</dbReference>
<dbReference type="PDB" id="6UNR">
    <property type="method" value="X-ray"/>
    <property type="resolution" value="2.20 A"/>
    <property type="chains" value="A=201-499"/>
</dbReference>
<dbReference type="PDB" id="6UNS">
    <property type="method" value="X-ray"/>
    <property type="resolution" value="2.30 A"/>
    <property type="chains" value="A/B=201-499"/>
</dbReference>
<dbReference type="PDB" id="6Z36">
    <property type="method" value="X-ray"/>
    <property type="resolution" value="1.37 A"/>
    <property type="chains" value="A/B=201-499"/>
</dbReference>
<dbReference type="PDB" id="6ZGC">
    <property type="method" value="X-ray"/>
    <property type="resolution" value="2.67 A"/>
    <property type="chains" value="A/B/C/D=201-499"/>
</dbReference>
<dbReference type="PDB" id="7A21">
    <property type="method" value="X-ray"/>
    <property type="resolution" value="2.14 A"/>
    <property type="chains" value="A/B=201-499"/>
</dbReference>
<dbReference type="PDB" id="7C3G">
    <property type="method" value="X-ray"/>
    <property type="resolution" value="1.80 A"/>
    <property type="chains" value="A/B=201-499"/>
</dbReference>
<dbReference type="PDB" id="7NNS">
    <property type="method" value="X-ray"/>
    <property type="resolution" value="2.14 A"/>
    <property type="chains" value="B=201-499"/>
</dbReference>
<dbReference type="PDB" id="7YRU">
    <property type="method" value="X-ray"/>
    <property type="resolution" value="2.60 A"/>
    <property type="chains" value="A=21-123"/>
</dbReference>
<dbReference type="PDB" id="8C7W">
    <property type="method" value="X-ray"/>
    <property type="resolution" value="2.26 A"/>
    <property type="chains" value="A=201-499"/>
</dbReference>
<dbReference type="PDB" id="8C7Z">
    <property type="method" value="X-ray"/>
    <property type="resolution" value="2.23 A"/>
    <property type="chains" value="A=201-499"/>
</dbReference>
<dbReference type="PDB" id="8POD">
    <property type="method" value="X-ray"/>
    <property type="resolution" value="2.59 A"/>
    <property type="chains" value="A=172-499"/>
</dbReference>
<dbReference type="PDB" id="8R7G">
    <property type="method" value="X-ray"/>
    <property type="resolution" value="2.09 A"/>
    <property type="chains" value="A/B/C/D=201-499"/>
</dbReference>
<dbReference type="PDB" id="8UWR">
    <property type="method" value="X-ray"/>
    <property type="resolution" value="2.04 A"/>
    <property type="chains" value="A=201-499"/>
</dbReference>
<dbReference type="PDB" id="9D8E">
    <property type="method" value="X-ray"/>
    <property type="resolution" value="1.72 A"/>
    <property type="chains" value="A/B=172-499"/>
</dbReference>
<dbReference type="PDB" id="9D8F">
    <property type="method" value="X-ray"/>
    <property type="resolution" value="1.86 A"/>
    <property type="chains" value="A/B=193-509"/>
</dbReference>
<dbReference type="PDB" id="9D8Z">
    <property type="method" value="X-ray"/>
    <property type="resolution" value="1.85 A"/>
    <property type="chains" value="A/B=178-509"/>
</dbReference>
<dbReference type="PDBsum" id="3H9R"/>
<dbReference type="PDBsum" id="3MTF"/>
<dbReference type="PDBsum" id="3OOM"/>
<dbReference type="PDBsum" id="3Q4U"/>
<dbReference type="PDBsum" id="4BGG"/>
<dbReference type="PDBsum" id="4C02"/>
<dbReference type="PDBsum" id="4DYM"/>
<dbReference type="PDBsum" id="5OXG"/>
<dbReference type="PDBsum" id="5OY6"/>
<dbReference type="PDBsum" id="5S75"/>
<dbReference type="PDBsum" id="5S76"/>
<dbReference type="PDBsum" id="5S77"/>
<dbReference type="PDBsum" id="5S78"/>
<dbReference type="PDBsum" id="5S79"/>
<dbReference type="PDBsum" id="5S7A"/>
<dbReference type="PDBsum" id="5S7B"/>
<dbReference type="PDBsum" id="5S7C"/>
<dbReference type="PDBsum" id="5S7D"/>
<dbReference type="PDBsum" id="5S7E"/>
<dbReference type="PDBsum" id="5S7F"/>
<dbReference type="PDBsum" id="5S7G"/>
<dbReference type="PDBsum" id="5S7H"/>
<dbReference type="PDBsum" id="5S7I"/>
<dbReference type="PDBsum" id="5S7J"/>
<dbReference type="PDBsum" id="5S7K"/>
<dbReference type="PDBsum" id="5S7L"/>
<dbReference type="PDBsum" id="5S7M"/>
<dbReference type="PDBsum" id="5S7N"/>
<dbReference type="PDBsum" id="5S7O"/>
<dbReference type="PDBsum" id="5S7P"/>
<dbReference type="PDBsum" id="5S7Q"/>
<dbReference type="PDBsum" id="5S7R"/>
<dbReference type="PDBsum" id="5S7S"/>
<dbReference type="PDBsum" id="5S7T"/>
<dbReference type="PDBsum" id="5S7U"/>
<dbReference type="PDBsum" id="5S7V"/>
<dbReference type="PDBsum" id="5S7W"/>
<dbReference type="PDBsum" id="5S7X"/>
<dbReference type="PDBsum" id="5S7Y"/>
<dbReference type="PDBsum" id="5S7Z"/>
<dbReference type="PDBsum" id="5S80"/>
<dbReference type="PDBsum" id="5S81"/>
<dbReference type="PDBsum" id="5S82"/>
<dbReference type="PDBsum" id="5S83"/>
<dbReference type="PDBsum" id="5S84"/>
<dbReference type="PDBsum" id="5S85"/>
<dbReference type="PDBsum" id="5S86"/>
<dbReference type="PDBsum" id="5S87"/>
<dbReference type="PDBsum" id="5S88"/>
<dbReference type="PDBsum" id="5S89"/>
<dbReference type="PDBsum" id="5S8A"/>
<dbReference type="PDBsum" id="5S8B"/>
<dbReference type="PDBsum" id="5S9K"/>
<dbReference type="PDBsum" id="6ACR"/>
<dbReference type="PDBsum" id="6EIX"/>
<dbReference type="PDBsum" id="6GI6"/>
<dbReference type="PDBsum" id="6GIN"/>
<dbReference type="PDBsum" id="6GIP"/>
<dbReference type="PDBsum" id="6I1S"/>
<dbReference type="PDBsum" id="6JUX"/>
<dbReference type="PDBsum" id="6SRH"/>
<dbReference type="PDBsum" id="6SZM"/>
<dbReference type="PDBsum" id="6T6D"/>
<dbReference type="PDBsum" id="6T8N"/>
<dbReference type="PDBsum" id="6TN8"/>
<dbReference type="PDBsum" id="6UNQ"/>
<dbReference type="PDBsum" id="6UNR"/>
<dbReference type="PDBsum" id="6UNS"/>
<dbReference type="PDBsum" id="6Z36"/>
<dbReference type="PDBsum" id="6ZGC"/>
<dbReference type="PDBsum" id="7A21"/>
<dbReference type="PDBsum" id="7C3G"/>
<dbReference type="PDBsum" id="7NNS"/>
<dbReference type="PDBsum" id="7YRU"/>
<dbReference type="PDBsum" id="8C7W"/>
<dbReference type="PDBsum" id="8C7Z"/>
<dbReference type="PDBsum" id="8POD"/>
<dbReference type="PDBsum" id="8R7G"/>
<dbReference type="PDBsum" id="8UWR"/>
<dbReference type="PDBsum" id="9D8E"/>
<dbReference type="PDBsum" id="9D8F"/>
<dbReference type="PDBsum" id="9D8Z"/>
<dbReference type="SMR" id="Q04771"/>
<dbReference type="BioGRID" id="106605">
    <property type="interactions" value="111"/>
</dbReference>
<dbReference type="CORUM" id="Q04771"/>
<dbReference type="DIP" id="DIP-212N"/>
<dbReference type="FunCoup" id="Q04771">
    <property type="interactions" value="993"/>
</dbReference>
<dbReference type="IntAct" id="Q04771">
    <property type="interactions" value="34"/>
</dbReference>
<dbReference type="MINT" id="Q04771"/>
<dbReference type="STRING" id="9606.ENSP00000405004"/>
<dbReference type="BindingDB" id="Q04771"/>
<dbReference type="ChEMBL" id="CHEMBL5903"/>
<dbReference type="DrugBank" id="DB00171">
    <property type="generic name" value="ATP"/>
</dbReference>
<dbReference type="DrugBank" id="DB08597">
    <property type="generic name" value="Dorsomorphin"/>
</dbReference>
<dbReference type="DrugBank" id="DB12010">
    <property type="generic name" value="Fostamatinib"/>
</dbReference>
<dbReference type="DrugBank" id="DB11763">
    <property type="generic name" value="Momelotinib"/>
</dbReference>
<dbReference type="DrugCentral" id="Q04771"/>
<dbReference type="GuidetoPHARMACOLOGY" id="1785"/>
<dbReference type="GlyCosmos" id="Q04771">
    <property type="glycosylation" value="1 site, No reported glycans"/>
</dbReference>
<dbReference type="GlyGen" id="Q04771">
    <property type="glycosylation" value="1 site, 1 N-linked glycan (1 site)"/>
</dbReference>
<dbReference type="iPTMnet" id="Q04771"/>
<dbReference type="PhosphoSitePlus" id="Q04771"/>
<dbReference type="SwissPalm" id="Q04771"/>
<dbReference type="BioMuta" id="ACVR1"/>
<dbReference type="DMDM" id="462447"/>
<dbReference type="CPTAC" id="CPTAC-2848"/>
<dbReference type="CPTAC" id="CPTAC-2849"/>
<dbReference type="jPOST" id="Q04771"/>
<dbReference type="MassIVE" id="Q04771"/>
<dbReference type="PaxDb" id="9606-ENSP00000263640"/>
<dbReference type="PeptideAtlas" id="Q04771"/>
<dbReference type="ProteomicsDB" id="58283"/>
<dbReference type="Pumba" id="Q04771"/>
<dbReference type="Antibodypedia" id="2371">
    <property type="antibodies" value="648 antibodies from 40 providers"/>
</dbReference>
<dbReference type="DNASU" id="90"/>
<dbReference type="Ensembl" id="ENST00000263640.7">
    <property type="protein sequence ID" value="ENSP00000263640.3"/>
    <property type="gene ID" value="ENSG00000115170.16"/>
</dbReference>
<dbReference type="Ensembl" id="ENST00000409283.6">
    <property type="protein sequence ID" value="ENSP00000387273.2"/>
    <property type="gene ID" value="ENSG00000115170.16"/>
</dbReference>
<dbReference type="Ensembl" id="ENST00000410057.6">
    <property type="protein sequence ID" value="ENSP00000387127.2"/>
    <property type="gene ID" value="ENSG00000115170.16"/>
</dbReference>
<dbReference type="Ensembl" id="ENST00000424669.6">
    <property type="protein sequence ID" value="ENSP00000400767.2"/>
    <property type="gene ID" value="ENSG00000115170.16"/>
</dbReference>
<dbReference type="Ensembl" id="ENST00000434821.7">
    <property type="protein sequence ID" value="ENSP00000405004.1"/>
    <property type="gene ID" value="ENSG00000115170.16"/>
</dbReference>
<dbReference type="Ensembl" id="ENST00000539637.6">
    <property type="protein sequence ID" value="ENSP00000440091.2"/>
    <property type="gene ID" value="ENSG00000115170.16"/>
</dbReference>
<dbReference type="Ensembl" id="ENST00000672582.1">
    <property type="protein sequence ID" value="ENSP00000500605.1"/>
    <property type="gene ID" value="ENSG00000115170.16"/>
</dbReference>
<dbReference type="Ensembl" id="ENST00000673324.1">
    <property type="protein sequence ID" value="ENSP00000500109.1"/>
    <property type="gene ID" value="ENSG00000115170.16"/>
</dbReference>
<dbReference type="Ensembl" id="ENST00000682025.1">
    <property type="protein sequence ID" value="ENSP00000507086.1"/>
    <property type="gene ID" value="ENSG00000115170.16"/>
</dbReference>
<dbReference type="Ensembl" id="ENST00000682300.1">
    <property type="protein sequence ID" value="ENSP00000507102.1"/>
    <property type="gene ID" value="ENSG00000115170.16"/>
</dbReference>
<dbReference type="Ensembl" id="ENST00000683441.1">
    <property type="protein sequence ID" value="ENSP00000508189.1"/>
    <property type="gene ID" value="ENSG00000115170.16"/>
</dbReference>
<dbReference type="Ensembl" id="ENST00000683487.1">
    <property type="protein sequence ID" value="ENSP00000507113.1"/>
    <property type="gene ID" value="ENSG00000115170.16"/>
</dbReference>
<dbReference type="Ensembl" id="ENST00000683820.1">
    <property type="protein sequence ID" value="ENSP00000507727.1"/>
    <property type="gene ID" value="ENSG00000115170.16"/>
</dbReference>
<dbReference type="Ensembl" id="ENST00000684348.1">
    <property type="protein sequence ID" value="ENSP00000508136.1"/>
    <property type="gene ID" value="ENSG00000115170.16"/>
</dbReference>
<dbReference type="Ensembl" id="ENST00000684595.1">
    <property type="protein sequence ID" value="ENSP00000507730.1"/>
    <property type="gene ID" value="ENSG00000115170.16"/>
</dbReference>
<dbReference type="GeneID" id="90"/>
<dbReference type="KEGG" id="hsa:90"/>
<dbReference type="MANE-Select" id="ENST00000434821.7">
    <property type="protein sequence ID" value="ENSP00000405004.1"/>
    <property type="RefSeq nucleotide sequence ID" value="NM_001111067.4"/>
    <property type="RefSeq protein sequence ID" value="NP_001104537.1"/>
</dbReference>
<dbReference type="UCSC" id="uc002tzm.4">
    <property type="organism name" value="human"/>
</dbReference>
<dbReference type="AGR" id="HGNC:171"/>
<dbReference type="CTD" id="90"/>
<dbReference type="DisGeNET" id="90"/>
<dbReference type="GeneCards" id="ACVR1"/>
<dbReference type="GeneReviews" id="ACVR1"/>
<dbReference type="HGNC" id="HGNC:171">
    <property type="gene designation" value="ACVR1"/>
</dbReference>
<dbReference type="HPA" id="ENSG00000115170">
    <property type="expression patterns" value="Low tissue specificity"/>
</dbReference>
<dbReference type="MalaCards" id="ACVR1"/>
<dbReference type="MIM" id="102576">
    <property type="type" value="gene"/>
</dbReference>
<dbReference type="MIM" id="135100">
    <property type="type" value="phenotype"/>
</dbReference>
<dbReference type="neXtProt" id="NX_Q04771"/>
<dbReference type="OpenTargets" id="ENSG00000115170"/>
<dbReference type="Orphanet" id="337">
    <property type="disease" value="Fibrodysplasia ossificans progressiva"/>
</dbReference>
<dbReference type="PharmGKB" id="PA24492"/>
<dbReference type="VEuPathDB" id="HostDB:ENSG00000115170"/>
<dbReference type="eggNOG" id="KOG2052">
    <property type="taxonomic scope" value="Eukaryota"/>
</dbReference>
<dbReference type="GeneTree" id="ENSGT00940000160160"/>
<dbReference type="HOGENOM" id="CLU_000288_8_5_1"/>
<dbReference type="InParanoid" id="Q04771"/>
<dbReference type="OMA" id="VFERGCI"/>
<dbReference type="OrthoDB" id="69842at2759"/>
<dbReference type="PAN-GO" id="Q04771">
    <property type="GO annotations" value="10 GO annotations based on evolutionary models"/>
</dbReference>
<dbReference type="PhylomeDB" id="Q04771"/>
<dbReference type="TreeFam" id="TF314724"/>
<dbReference type="BRENDA" id="2.7.10.2">
    <property type="organism ID" value="2681"/>
</dbReference>
<dbReference type="PathwayCommons" id="Q04771"/>
<dbReference type="SignaLink" id="Q04771"/>
<dbReference type="SIGNOR" id="Q04771"/>
<dbReference type="BioGRID-ORCS" id="90">
    <property type="hits" value="18 hits in 1201 CRISPR screens"/>
</dbReference>
<dbReference type="ChiTaRS" id="ACVR1">
    <property type="organism name" value="human"/>
</dbReference>
<dbReference type="EvolutionaryTrace" id="Q04771"/>
<dbReference type="GeneWiki" id="ACVR1"/>
<dbReference type="GenomeRNAi" id="90"/>
<dbReference type="Pharos" id="Q04771">
    <property type="development level" value="Tchem"/>
</dbReference>
<dbReference type="PRO" id="PR:Q04771"/>
<dbReference type="Proteomes" id="UP000005640">
    <property type="component" value="Chromosome 2"/>
</dbReference>
<dbReference type="RNAct" id="Q04771">
    <property type="molecule type" value="protein"/>
</dbReference>
<dbReference type="Bgee" id="ENSG00000115170">
    <property type="expression patterns" value="Expressed in cartilage tissue and 209 other cell types or tissues"/>
</dbReference>
<dbReference type="ExpressionAtlas" id="Q04771">
    <property type="expression patterns" value="baseline and differential"/>
</dbReference>
<dbReference type="GO" id="GO:0048179">
    <property type="term" value="C:activin receptor complex"/>
    <property type="evidence" value="ECO:0000314"/>
    <property type="project" value="UniProtKB"/>
</dbReference>
<dbReference type="GO" id="GO:0045177">
    <property type="term" value="C:apical part of cell"/>
    <property type="evidence" value="ECO:0007669"/>
    <property type="project" value="Ensembl"/>
</dbReference>
<dbReference type="GO" id="GO:0070724">
    <property type="term" value="C:BMP receptor complex"/>
    <property type="evidence" value="ECO:0000318"/>
    <property type="project" value="GO_Central"/>
</dbReference>
<dbReference type="GO" id="GO:0005886">
    <property type="term" value="C:plasma membrane"/>
    <property type="evidence" value="ECO:0000314"/>
    <property type="project" value="UniProtKB"/>
</dbReference>
<dbReference type="GO" id="GO:0048185">
    <property type="term" value="F:activin binding"/>
    <property type="evidence" value="ECO:0000314"/>
    <property type="project" value="UniProtKB"/>
</dbReference>
<dbReference type="GO" id="GO:0016361">
    <property type="term" value="F:activin receptor activity, type I"/>
    <property type="evidence" value="ECO:0007669"/>
    <property type="project" value="Ensembl"/>
</dbReference>
<dbReference type="GO" id="GO:0005524">
    <property type="term" value="F:ATP binding"/>
    <property type="evidence" value="ECO:0000314"/>
    <property type="project" value="HGNC-UCL"/>
</dbReference>
<dbReference type="GO" id="GO:0098821">
    <property type="term" value="F:BMP receptor activity"/>
    <property type="evidence" value="ECO:0000314"/>
    <property type="project" value="ARUK-UCL"/>
</dbReference>
<dbReference type="GO" id="GO:0045296">
    <property type="term" value="F:cadherin binding"/>
    <property type="evidence" value="ECO:0000353"/>
    <property type="project" value="ARUK-UCL"/>
</dbReference>
<dbReference type="GO" id="GO:0046872">
    <property type="term" value="F:metal ion binding"/>
    <property type="evidence" value="ECO:0007669"/>
    <property type="project" value="UniProtKB-KW"/>
</dbReference>
<dbReference type="GO" id="GO:0017046">
    <property type="term" value="F:peptide hormone binding"/>
    <property type="evidence" value="ECO:0000303"/>
    <property type="project" value="UniProtKB"/>
</dbReference>
<dbReference type="GO" id="GO:0042803">
    <property type="term" value="F:protein homodimerization activity"/>
    <property type="evidence" value="ECO:0000314"/>
    <property type="project" value="BHF-UCL"/>
</dbReference>
<dbReference type="GO" id="GO:0004672">
    <property type="term" value="F:protein kinase activity"/>
    <property type="evidence" value="ECO:0000314"/>
    <property type="project" value="BHF-UCL"/>
</dbReference>
<dbReference type="GO" id="GO:0004674">
    <property type="term" value="F:protein serine/threonine kinase activity"/>
    <property type="evidence" value="ECO:0000314"/>
    <property type="project" value="HGNC-UCL"/>
</dbReference>
<dbReference type="GO" id="GO:1990782">
    <property type="term" value="F:protein tyrosine kinase binding"/>
    <property type="evidence" value="ECO:0000353"/>
    <property type="project" value="ARUK-UCL"/>
</dbReference>
<dbReference type="GO" id="GO:0046332">
    <property type="term" value="F:SMAD binding"/>
    <property type="evidence" value="ECO:0000314"/>
    <property type="project" value="HGNC-UCL"/>
</dbReference>
<dbReference type="GO" id="GO:0050431">
    <property type="term" value="F:transforming growth factor beta binding"/>
    <property type="evidence" value="ECO:0000314"/>
    <property type="project" value="UniProtKB"/>
</dbReference>
<dbReference type="GO" id="GO:0005025">
    <property type="term" value="F:transforming growth factor beta receptor activity, type I"/>
    <property type="evidence" value="ECO:0000318"/>
    <property type="project" value="GO_Central"/>
</dbReference>
<dbReference type="GO" id="GO:0004675">
    <property type="term" value="F:transmembrane receptor protein serine/threonine kinase activity"/>
    <property type="evidence" value="ECO:0000314"/>
    <property type="project" value="BHF-UCL"/>
</dbReference>
<dbReference type="GO" id="GO:0032924">
    <property type="term" value="P:activin receptor signaling pathway"/>
    <property type="evidence" value="ECO:0000314"/>
    <property type="project" value="BHF-UCL"/>
</dbReference>
<dbReference type="GO" id="GO:0002526">
    <property type="term" value="P:acute inflammatory response"/>
    <property type="evidence" value="ECO:0007669"/>
    <property type="project" value="Ensembl"/>
</dbReference>
<dbReference type="GO" id="GO:0003289">
    <property type="term" value="P:atrial septum primum morphogenesis"/>
    <property type="evidence" value="ECO:0000315"/>
    <property type="project" value="BHF-UCL"/>
</dbReference>
<dbReference type="GO" id="GO:0003181">
    <property type="term" value="P:atrioventricular valve morphogenesis"/>
    <property type="evidence" value="ECO:0000250"/>
    <property type="project" value="BHF-UCL"/>
</dbReference>
<dbReference type="GO" id="GO:0030509">
    <property type="term" value="P:BMP signaling pathway"/>
    <property type="evidence" value="ECO:0000314"/>
    <property type="project" value="HGNC-UCL"/>
</dbReference>
<dbReference type="GO" id="GO:0001569">
    <property type="term" value="P:branching involved in blood vessel morphogenesis"/>
    <property type="evidence" value="ECO:0007669"/>
    <property type="project" value="Ensembl"/>
</dbReference>
<dbReference type="GO" id="GO:0060923">
    <property type="term" value="P:cardiac muscle cell fate commitment"/>
    <property type="evidence" value="ECO:0000315"/>
    <property type="project" value="BHF-UCL"/>
</dbReference>
<dbReference type="GO" id="GO:0030154">
    <property type="term" value="P:cell differentiation"/>
    <property type="evidence" value="ECO:0000318"/>
    <property type="project" value="GO_Central"/>
</dbReference>
<dbReference type="GO" id="GO:0071773">
    <property type="term" value="P:cellular response to BMP stimulus"/>
    <property type="evidence" value="ECO:0000315"/>
    <property type="project" value="BHF-UCL"/>
</dbReference>
<dbReference type="GO" id="GO:0071363">
    <property type="term" value="P:cellular response to growth factor stimulus"/>
    <property type="evidence" value="ECO:0000318"/>
    <property type="project" value="GO_Central"/>
</dbReference>
<dbReference type="GO" id="GO:0007368">
    <property type="term" value="P:determination of left/right symmetry"/>
    <property type="evidence" value="ECO:0007669"/>
    <property type="project" value="Ensembl"/>
</dbReference>
<dbReference type="GO" id="GO:0009953">
    <property type="term" value="P:dorsal/ventral pattern formation"/>
    <property type="evidence" value="ECO:0000318"/>
    <property type="project" value="GO_Central"/>
</dbReference>
<dbReference type="GO" id="GO:0003143">
    <property type="term" value="P:embryonic heart tube morphogenesis"/>
    <property type="evidence" value="ECO:0000315"/>
    <property type="project" value="BHF-UCL"/>
</dbReference>
<dbReference type="GO" id="GO:0061445">
    <property type="term" value="P:endocardial cushion cell fate commitment"/>
    <property type="evidence" value="ECO:0000315"/>
    <property type="project" value="BHF-UCL"/>
</dbReference>
<dbReference type="GO" id="GO:0003272">
    <property type="term" value="P:endocardial cushion formation"/>
    <property type="evidence" value="ECO:0000250"/>
    <property type="project" value="BHF-UCL"/>
</dbReference>
<dbReference type="GO" id="GO:0003274">
    <property type="term" value="P:endocardial cushion fusion"/>
    <property type="evidence" value="ECO:0000250"/>
    <property type="project" value="BHF-UCL"/>
</dbReference>
<dbReference type="GO" id="GO:0001702">
    <property type="term" value="P:gastrulation with mouth forming second"/>
    <property type="evidence" value="ECO:0007669"/>
    <property type="project" value="Ensembl"/>
</dbReference>
<dbReference type="GO" id="GO:0007281">
    <property type="term" value="P:germ cell development"/>
    <property type="evidence" value="ECO:0007669"/>
    <property type="project" value="Ensembl"/>
</dbReference>
<dbReference type="GO" id="GO:0007507">
    <property type="term" value="P:heart development"/>
    <property type="evidence" value="ECO:0000318"/>
    <property type="project" value="GO_Central"/>
</dbReference>
<dbReference type="GO" id="GO:0001701">
    <property type="term" value="P:in utero embryonic development"/>
    <property type="evidence" value="ECO:0007669"/>
    <property type="project" value="Ensembl"/>
</dbReference>
<dbReference type="GO" id="GO:0001707">
    <property type="term" value="P:mesoderm formation"/>
    <property type="evidence" value="ECO:0007669"/>
    <property type="project" value="Ensembl"/>
</dbReference>
<dbReference type="GO" id="GO:0003183">
    <property type="term" value="P:mitral valve morphogenesis"/>
    <property type="evidence" value="ECO:0000315"/>
    <property type="project" value="BHF-UCL"/>
</dbReference>
<dbReference type="GO" id="GO:0032926">
    <property type="term" value="P:negative regulation of activin receptor signaling pathway"/>
    <property type="evidence" value="ECO:0000315"/>
    <property type="project" value="HGNC-UCL"/>
</dbReference>
<dbReference type="GO" id="GO:2001237">
    <property type="term" value="P:negative regulation of extrinsic apoptotic signaling pathway"/>
    <property type="evidence" value="ECO:0000315"/>
    <property type="project" value="BHF-UCL"/>
</dbReference>
<dbReference type="GO" id="GO:2000134">
    <property type="term" value="P:negative regulation of G1/S transition of mitotic cell cycle"/>
    <property type="evidence" value="ECO:0000315"/>
    <property type="project" value="HGNC-UCL"/>
</dbReference>
<dbReference type="GO" id="GO:0009968">
    <property type="term" value="P:negative regulation of signal transduction"/>
    <property type="evidence" value="ECO:0000315"/>
    <property type="project" value="HGNC-UCL"/>
</dbReference>
<dbReference type="GO" id="GO:0001755">
    <property type="term" value="P:neural crest cell migration"/>
    <property type="evidence" value="ECO:0007669"/>
    <property type="project" value="Ensembl"/>
</dbReference>
<dbReference type="GO" id="GO:0001649">
    <property type="term" value="P:osteoblast differentiation"/>
    <property type="evidence" value="ECO:0000314"/>
    <property type="project" value="UniProt"/>
</dbReference>
<dbReference type="GO" id="GO:0060037">
    <property type="term" value="P:pharyngeal system development"/>
    <property type="evidence" value="ECO:0007669"/>
    <property type="project" value="Ensembl"/>
</dbReference>
<dbReference type="GO" id="GO:0030501">
    <property type="term" value="P:positive regulation of bone mineralization"/>
    <property type="evidence" value="ECO:0000315"/>
    <property type="project" value="BHF-UCL"/>
</dbReference>
<dbReference type="GO" id="GO:0062043">
    <property type="term" value="P:positive regulation of cardiac epithelial to mesenchymal transition"/>
    <property type="evidence" value="ECO:0000250"/>
    <property type="project" value="BHF-UCL"/>
</dbReference>
<dbReference type="GO" id="GO:0030335">
    <property type="term" value="P:positive regulation of cell migration"/>
    <property type="evidence" value="ECO:0000316"/>
    <property type="project" value="BHF-UCL"/>
</dbReference>
<dbReference type="GO" id="GO:2000017">
    <property type="term" value="P:positive regulation of determination of dorsal identity"/>
    <property type="evidence" value="ECO:0000314"/>
    <property type="project" value="BHF-UCL"/>
</dbReference>
<dbReference type="GO" id="GO:0045893">
    <property type="term" value="P:positive regulation of DNA-templated transcription"/>
    <property type="evidence" value="ECO:0000314"/>
    <property type="project" value="UniProtKB"/>
</dbReference>
<dbReference type="GO" id="GO:1902533">
    <property type="term" value="P:positive regulation of intracellular signal transduction"/>
    <property type="evidence" value="ECO:0000315"/>
    <property type="project" value="ARUK-UCL"/>
</dbReference>
<dbReference type="GO" id="GO:0045669">
    <property type="term" value="P:positive regulation of osteoblast differentiation"/>
    <property type="evidence" value="ECO:0000315"/>
    <property type="project" value="BHF-UCL"/>
</dbReference>
<dbReference type="GO" id="GO:0060391">
    <property type="term" value="P:positive regulation of SMAD protein signal transduction"/>
    <property type="evidence" value="ECO:0000314"/>
    <property type="project" value="BHF-UCL"/>
</dbReference>
<dbReference type="GO" id="GO:0045944">
    <property type="term" value="P:positive regulation of transcription by RNA polymerase II"/>
    <property type="evidence" value="ECO:0000314"/>
    <property type="project" value="BHF-UCL"/>
</dbReference>
<dbReference type="GO" id="GO:0030278">
    <property type="term" value="P:regulation of ossification"/>
    <property type="evidence" value="ECO:0000315"/>
    <property type="project" value="UniProtKB"/>
</dbReference>
<dbReference type="GO" id="GO:0051145">
    <property type="term" value="P:smooth muscle cell differentiation"/>
    <property type="evidence" value="ECO:0007669"/>
    <property type="project" value="Ensembl"/>
</dbReference>
<dbReference type="GO" id="GO:0007179">
    <property type="term" value="P:transforming growth factor beta receptor signaling pathway"/>
    <property type="evidence" value="ECO:0000314"/>
    <property type="project" value="UniProtKB"/>
</dbReference>
<dbReference type="GO" id="GO:0060412">
    <property type="term" value="P:ventricular septum morphogenesis"/>
    <property type="evidence" value="ECO:0000250"/>
    <property type="project" value="BHF-UCL"/>
</dbReference>
<dbReference type="CDD" id="cd14142">
    <property type="entry name" value="STKc_ACVR1_ALK1"/>
    <property type="match status" value="1"/>
</dbReference>
<dbReference type="CDD" id="cd23535">
    <property type="entry name" value="TFP_LU_ECD_ALK2"/>
    <property type="match status" value="1"/>
</dbReference>
<dbReference type="FunFam" id="1.10.510.10:FF:000018">
    <property type="entry name" value="Receptor protein serine/threonine kinase"/>
    <property type="match status" value="1"/>
</dbReference>
<dbReference type="FunFam" id="3.30.200.20:FF:000064">
    <property type="entry name" value="Receptor protein serine/threonine kinase"/>
    <property type="match status" value="1"/>
</dbReference>
<dbReference type="FunFam" id="2.10.60.10:FF:000008">
    <property type="entry name" value="Serine/threonine-protein kinase receptor"/>
    <property type="match status" value="1"/>
</dbReference>
<dbReference type="Gene3D" id="2.10.60.10">
    <property type="entry name" value="CD59"/>
    <property type="match status" value="1"/>
</dbReference>
<dbReference type="Gene3D" id="3.30.200.20">
    <property type="entry name" value="Phosphorylase Kinase, domain 1"/>
    <property type="match status" value="1"/>
</dbReference>
<dbReference type="Gene3D" id="1.10.510.10">
    <property type="entry name" value="Transferase(Phosphotransferase) domain 1"/>
    <property type="match status" value="1"/>
</dbReference>
<dbReference type="InterPro" id="IPR000472">
    <property type="entry name" value="Activin_recp"/>
</dbReference>
<dbReference type="InterPro" id="IPR003605">
    <property type="entry name" value="GS_dom"/>
</dbReference>
<dbReference type="InterPro" id="IPR011009">
    <property type="entry name" value="Kinase-like_dom_sf"/>
</dbReference>
<dbReference type="InterPro" id="IPR000719">
    <property type="entry name" value="Prot_kinase_dom"/>
</dbReference>
<dbReference type="InterPro" id="IPR017441">
    <property type="entry name" value="Protein_kinase_ATP_BS"/>
</dbReference>
<dbReference type="InterPro" id="IPR008271">
    <property type="entry name" value="Ser/Thr_kinase_AS"/>
</dbReference>
<dbReference type="InterPro" id="IPR045860">
    <property type="entry name" value="Snake_toxin-like_sf"/>
</dbReference>
<dbReference type="InterPro" id="IPR000333">
    <property type="entry name" value="TGFB_receptor"/>
</dbReference>
<dbReference type="PANTHER" id="PTHR23255:SF69">
    <property type="entry name" value="ACTIVIN RECEPTOR TYPE-1"/>
    <property type="match status" value="1"/>
</dbReference>
<dbReference type="PANTHER" id="PTHR23255">
    <property type="entry name" value="TRANSFORMING GROWTH FACTOR-BETA RECEPTOR TYPE I AND II"/>
    <property type="match status" value="1"/>
</dbReference>
<dbReference type="Pfam" id="PF01064">
    <property type="entry name" value="Activin_recp"/>
    <property type="match status" value="1"/>
</dbReference>
<dbReference type="Pfam" id="PF00069">
    <property type="entry name" value="Pkinase"/>
    <property type="match status" value="1"/>
</dbReference>
<dbReference type="Pfam" id="PF08515">
    <property type="entry name" value="TGF_beta_GS"/>
    <property type="match status" value="1"/>
</dbReference>
<dbReference type="PRINTS" id="PR00653">
    <property type="entry name" value="ACTIVIN2R"/>
</dbReference>
<dbReference type="SMART" id="SM00467">
    <property type="entry name" value="GS"/>
    <property type="match status" value="1"/>
</dbReference>
<dbReference type="SMART" id="SM00220">
    <property type="entry name" value="S_TKc"/>
    <property type="match status" value="1"/>
</dbReference>
<dbReference type="SUPFAM" id="SSF56112">
    <property type="entry name" value="Protein kinase-like (PK-like)"/>
    <property type="match status" value="1"/>
</dbReference>
<dbReference type="SUPFAM" id="SSF57302">
    <property type="entry name" value="Snake toxin-like"/>
    <property type="match status" value="1"/>
</dbReference>
<dbReference type="PROSITE" id="PS51256">
    <property type="entry name" value="GS"/>
    <property type="match status" value="1"/>
</dbReference>
<dbReference type="PROSITE" id="PS00107">
    <property type="entry name" value="PROTEIN_KINASE_ATP"/>
    <property type="match status" value="1"/>
</dbReference>
<dbReference type="PROSITE" id="PS50011">
    <property type="entry name" value="PROTEIN_KINASE_DOM"/>
    <property type="match status" value="1"/>
</dbReference>
<dbReference type="PROSITE" id="PS00108">
    <property type="entry name" value="PROTEIN_KINASE_ST"/>
    <property type="match status" value="1"/>
</dbReference>
<keyword id="KW-0002">3D-structure</keyword>
<keyword id="KW-0067">ATP-binding</keyword>
<keyword id="KW-0225">Disease variant</keyword>
<keyword id="KW-0325">Glycoprotein</keyword>
<keyword id="KW-0418">Kinase</keyword>
<keyword id="KW-0460">Magnesium</keyword>
<keyword id="KW-0464">Manganese</keyword>
<keyword id="KW-0472">Membrane</keyword>
<keyword id="KW-0479">Metal-binding</keyword>
<keyword id="KW-0547">Nucleotide-binding</keyword>
<keyword id="KW-0597">Phosphoprotein</keyword>
<keyword id="KW-1267">Proteomics identification</keyword>
<keyword id="KW-0675">Receptor</keyword>
<keyword id="KW-1185">Reference proteome</keyword>
<keyword id="KW-0723">Serine/threonine-protein kinase</keyword>
<keyword id="KW-0732">Signal</keyword>
<keyword id="KW-0808">Transferase</keyword>
<keyword id="KW-0812">Transmembrane</keyword>
<keyword id="KW-1133">Transmembrane helix</keyword>
<gene>
    <name type="primary">ACVR1</name>
    <name type="synonym">ACVRLK2</name>
</gene>
<organism>
    <name type="scientific">Homo sapiens</name>
    <name type="common">Human</name>
    <dbReference type="NCBI Taxonomy" id="9606"/>
    <lineage>
        <taxon>Eukaryota</taxon>
        <taxon>Metazoa</taxon>
        <taxon>Chordata</taxon>
        <taxon>Craniata</taxon>
        <taxon>Vertebrata</taxon>
        <taxon>Euteleostomi</taxon>
        <taxon>Mammalia</taxon>
        <taxon>Eutheria</taxon>
        <taxon>Euarchontoglires</taxon>
        <taxon>Primates</taxon>
        <taxon>Haplorrhini</taxon>
        <taxon>Catarrhini</taxon>
        <taxon>Hominidae</taxon>
        <taxon>Homo</taxon>
    </lineage>
</organism>
<feature type="signal peptide" evidence="1">
    <location>
        <begin position="1"/>
        <end position="20"/>
    </location>
</feature>
<feature type="chain" id="PRO_0000024394" description="Activin receptor type-1">
    <location>
        <begin position="21"/>
        <end position="509"/>
    </location>
</feature>
<feature type="topological domain" description="Extracellular" evidence="4">
    <location>
        <begin position="21"/>
        <end position="123"/>
    </location>
</feature>
<feature type="transmembrane region" description="Helical" evidence="4">
    <location>
        <begin position="124"/>
        <end position="146"/>
    </location>
</feature>
<feature type="topological domain" description="Cytoplasmic" evidence="4">
    <location>
        <begin position="147"/>
        <end position="509"/>
    </location>
</feature>
<feature type="domain" description="GS" evidence="6">
    <location>
        <begin position="178"/>
        <end position="207"/>
    </location>
</feature>
<feature type="domain" description="Protein kinase" evidence="5">
    <location>
        <begin position="208"/>
        <end position="502"/>
    </location>
</feature>
<feature type="active site" description="Proton acceptor" evidence="5 7">
    <location>
        <position position="336"/>
    </location>
</feature>
<feature type="binding site" evidence="5">
    <location>
        <begin position="214"/>
        <end position="222"/>
    </location>
    <ligand>
        <name>ATP</name>
        <dbReference type="ChEBI" id="CHEBI:30616"/>
    </ligand>
</feature>
<feature type="binding site" evidence="5">
    <location>
        <position position="235"/>
    </location>
    <ligand>
        <name>ATP</name>
        <dbReference type="ChEBI" id="CHEBI:30616"/>
    </ligand>
</feature>
<feature type="modified residue" description="Phosphoserine" evidence="26">
    <location>
        <position position="501"/>
    </location>
</feature>
<feature type="glycosylation site" description="N-linked (GlcNAc...) asparagine" evidence="4">
    <location>
        <position position="102"/>
    </location>
</feature>
<feature type="sequence variant" id="VAR_041392" description="In dbSNP:rs13406336." evidence="9">
    <original>A</original>
    <variation>G</variation>
    <location>
        <position position="15"/>
    </location>
</feature>
<feature type="sequence variant" id="VAR_041393" description="In dbSNP:rs55957214." evidence="9">
    <original>S</original>
    <variation>F</variation>
    <location>
        <position position="41"/>
    </location>
</feature>
<feature type="sequence variant" id="VAR_041394" description="In dbSNP:rs34056189." evidence="9">
    <original>H</original>
    <variation>Q</variation>
    <location>
        <position position="47"/>
    </location>
</feature>
<feature type="sequence variant" id="VAR_041395" description="In a melanoma sample; somatic mutation." evidence="9">
    <original>P</original>
    <variation>S</variation>
    <location>
        <position position="115"/>
    </location>
</feature>
<feature type="sequence variant" id="VAR_058418" description="In FOP; variant phenotype." evidence="12">
    <original>PF</original>
    <variation>L</variation>
    <location>
        <begin position="197"/>
        <end position="198"/>
    </location>
</feature>
<feature type="sequence variant" id="VAR_058419" description="In FOP; with some atypical features; dbSNP:rs387906591." evidence="13">
    <original>R</original>
    <variation>I</variation>
    <location>
        <position position="202"/>
    </location>
</feature>
<feature type="sequence variant" id="VAR_028444" description="In FOP; dbSNP:rs121912678." evidence="8 12">
    <original>R</original>
    <variation>H</variation>
    <location>
        <position position="206"/>
    </location>
</feature>
<feature type="sequence variant" id="VAR_058420" description="In FOP; with some atypical features." evidence="12">
    <original>Q</original>
    <variation>E</variation>
    <location>
        <position position="207"/>
    </location>
</feature>
<feature type="sequence variant" id="VAR_058421" description="In FOP; variant phenotype; dbSNP:rs387906589." evidence="12 13">
    <original>G</original>
    <variation>E</variation>
    <location>
        <position position="328"/>
    </location>
</feature>
<feature type="sequence variant" id="VAR_058422" description="In FOP; variant phenotype; dbSNP:rs387906588." evidence="12">
    <original>G</original>
    <variation>R</variation>
    <location>
        <position position="328"/>
    </location>
</feature>
<feature type="sequence variant" id="VAR_058423" description="In FOP; variant phenotype; dbSNP:rs387906588." evidence="12">
    <original>G</original>
    <variation>W</variation>
    <location>
        <position position="328"/>
    </location>
</feature>
<feature type="sequence variant" id="VAR_058424" description="In FOP; variant phenotype; dbSNP:rs121912679." evidence="12">
    <original>G</original>
    <variation>D</variation>
    <location>
        <position position="356"/>
    </location>
</feature>
<feature type="sequence variant" id="VAR_058425" description="In FOP; variant phenotype; dbSNP:rs387906590." evidence="12">
    <original>R</original>
    <variation>P</variation>
    <location>
        <position position="375"/>
    </location>
</feature>
<feature type="mutagenesis site" description="Almost complete loss of alcaline phosphatase induction; in association with A-325." evidence="18">
    <original>T</original>
    <variation>V</variation>
    <location>
        <position position="203"/>
    </location>
</feature>
<feature type="mutagenesis site" description="Strong induction of SMAD1 phosphorylation." evidence="22">
    <original>Q</original>
    <variation>D</variation>
    <location>
        <position position="207"/>
    </location>
</feature>
<feature type="mutagenesis site" description="Almost complete loss of alcaline phosphatase induction; in association with V-203." evidence="18">
    <original>G</original>
    <variation>A</variation>
    <location>
        <position position="325"/>
    </location>
</feature>
<feature type="strand" evidence="30">
    <location>
        <begin position="33"/>
        <end position="36"/>
    </location>
</feature>
<feature type="strand" evidence="30">
    <location>
        <begin position="42"/>
        <end position="44"/>
    </location>
</feature>
<feature type="strand" evidence="30">
    <location>
        <begin position="46"/>
        <end position="60"/>
    </location>
</feature>
<feature type="strand" evidence="30">
    <location>
        <begin position="63"/>
        <end position="71"/>
    </location>
</feature>
<feature type="strand" evidence="30">
    <location>
        <begin position="75"/>
        <end position="77"/>
    </location>
</feature>
<feature type="strand" evidence="30">
    <location>
        <begin position="89"/>
        <end position="94"/>
    </location>
</feature>
<feature type="turn" evidence="30">
    <location>
        <begin position="97"/>
        <end position="102"/>
    </location>
</feature>
<feature type="helix" evidence="28">
    <location>
        <begin position="180"/>
        <end position="184"/>
    </location>
</feature>
<feature type="strand" evidence="28">
    <location>
        <begin position="194"/>
        <end position="196"/>
    </location>
</feature>
<feature type="helix" evidence="28">
    <location>
        <begin position="198"/>
        <end position="205"/>
    </location>
</feature>
<feature type="strand" evidence="29">
    <location>
        <begin position="209"/>
        <end position="217"/>
    </location>
</feature>
<feature type="strand" evidence="29">
    <location>
        <begin position="220"/>
        <end position="227"/>
    </location>
</feature>
<feature type="strand" evidence="29">
    <location>
        <begin position="230"/>
        <end position="237"/>
    </location>
</feature>
<feature type="helix" evidence="29">
    <location>
        <begin position="239"/>
        <end position="241"/>
    </location>
</feature>
<feature type="helix" evidence="29">
    <location>
        <begin position="242"/>
        <end position="254"/>
    </location>
</feature>
<feature type="strand" evidence="29">
    <location>
        <begin position="265"/>
        <end position="272"/>
    </location>
</feature>
<feature type="strand" evidence="29">
    <location>
        <begin position="274"/>
        <end position="283"/>
    </location>
</feature>
<feature type="helix" evidence="29">
    <location>
        <begin position="291"/>
        <end position="297"/>
    </location>
</feature>
<feature type="helix" evidence="29">
    <location>
        <begin position="302"/>
        <end position="320"/>
    </location>
</feature>
<feature type="strand" evidence="27">
    <location>
        <begin position="325"/>
        <end position="327"/>
    </location>
</feature>
<feature type="strand" evidence="29">
    <location>
        <begin position="331"/>
        <end position="333"/>
    </location>
</feature>
<feature type="helix" evidence="29">
    <location>
        <begin position="339"/>
        <end position="341"/>
    </location>
</feature>
<feature type="strand" evidence="29">
    <location>
        <begin position="342"/>
        <end position="344"/>
    </location>
</feature>
<feature type="strand" evidence="29">
    <location>
        <begin position="350"/>
        <end position="352"/>
    </location>
</feature>
<feature type="strand" evidence="29">
    <location>
        <begin position="359"/>
        <end position="361"/>
    </location>
</feature>
<feature type="turn" evidence="29">
    <location>
        <begin position="363"/>
        <end position="366"/>
    </location>
</feature>
<feature type="strand" evidence="29">
    <location>
        <begin position="367"/>
        <end position="369"/>
    </location>
</feature>
<feature type="helix" evidence="29">
    <location>
        <begin position="379"/>
        <end position="381"/>
    </location>
</feature>
<feature type="helix" evidence="29">
    <location>
        <begin position="384"/>
        <end position="387"/>
    </location>
</feature>
<feature type="helix" evidence="29">
    <location>
        <begin position="396"/>
        <end position="415"/>
    </location>
</feature>
<feature type="turn" evidence="29">
    <location>
        <begin position="430"/>
        <end position="434"/>
    </location>
</feature>
<feature type="helix" evidence="29">
    <location>
        <begin position="441"/>
        <end position="448"/>
    </location>
</feature>
<feature type="helix" evidence="29">
    <location>
        <begin position="459"/>
        <end position="463"/>
    </location>
</feature>
<feature type="helix" evidence="29">
    <location>
        <begin position="465"/>
        <end position="477"/>
    </location>
</feature>
<feature type="helix" evidence="29">
    <location>
        <begin position="482"/>
        <end position="484"/>
    </location>
</feature>
<feature type="helix" evidence="29">
    <location>
        <begin position="488"/>
        <end position="496"/>
    </location>
</feature>
<evidence type="ECO:0000250" key="1"/>
<evidence type="ECO:0000250" key="2">
    <source>
        <dbReference type="UniProtKB" id="P15261"/>
    </source>
</evidence>
<evidence type="ECO:0000250" key="3">
    <source>
        <dbReference type="UniProtKB" id="P37172"/>
    </source>
</evidence>
<evidence type="ECO:0000255" key="4"/>
<evidence type="ECO:0000255" key="5">
    <source>
        <dbReference type="PROSITE-ProRule" id="PRU00159"/>
    </source>
</evidence>
<evidence type="ECO:0000255" key="6">
    <source>
        <dbReference type="PROSITE-ProRule" id="PRU00585"/>
    </source>
</evidence>
<evidence type="ECO:0000255" key="7">
    <source>
        <dbReference type="PROSITE-ProRule" id="PRU10027"/>
    </source>
</evidence>
<evidence type="ECO:0000269" key="8">
    <source>
    </source>
</evidence>
<evidence type="ECO:0000269" key="9">
    <source>
    </source>
</evidence>
<evidence type="ECO:0000269" key="10">
    <source>
    </source>
</evidence>
<evidence type="ECO:0000269" key="11">
    <source>
    </source>
</evidence>
<evidence type="ECO:0000269" key="12">
    <source>
    </source>
</evidence>
<evidence type="ECO:0000269" key="13">
    <source>
    </source>
</evidence>
<evidence type="ECO:0000269" key="14">
    <source>
    </source>
</evidence>
<evidence type="ECO:0000269" key="15">
    <source>
    </source>
</evidence>
<evidence type="ECO:0000269" key="16">
    <source>
    </source>
</evidence>
<evidence type="ECO:0000269" key="17">
    <source>
    </source>
</evidence>
<evidence type="ECO:0000269" key="18">
    <source>
    </source>
</evidence>
<evidence type="ECO:0000269" key="19">
    <source>
    </source>
</evidence>
<evidence type="ECO:0000269" key="20">
    <source>
    </source>
</evidence>
<evidence type="ECO:0000269" key="21">
    <source>
    </source>
</evidence>
<evidence type="ECO:0000269" key="22">
    <source>
    </source>
</evidence>
<evidence type="ECO:0000269" key="23">
    <source ref="14"/>
</evidence>
<evidence type="ECO:0000305" key="24"/>
<evidence type="ECO:0007744" key="25">
    <source>
        <dbReference type="PDB" id="3H9R"/>
    </source>
</evidence>
<evidence type="ECO:0007744" key="26">
    <source>
    </source>
</evidence>
<evidence type="ECO:0007829" key="27">
    <source>
        <dbReference type="PDB" id="3MTF"/>
    </source>
</evidence>
<evidence type="ECO:0007829" key="28">
    <source>
        <dbReference type="PDB" id="6I1S"/>
    </source>
</evidence>
<evidence type="ECO:0007829" key="29">
    <source>
        <dbReference type="PDB" id="6SRH"/>
    </source>
</evidence>
<evidence type="ECO:0007829" key="30">
    <source>
        <dbReference type="PDB" id="7YRU"/>
    </source>
</evidence>